<protein>
    <recommendedName>
        <fullName evidence="1">Biotin-dependent acetyl-/propionyl-coenzyme A carboxylase beta6 subunit</fullName>
    </recommendedName>
    <alternativeName>
        <fullName evidence="1">Acetyl-CoA carboxylase</fullName>
        <shortName evidence="1">ACC</shortName>
        <ecNumber evidence="1">2.1.3.15</ecNumber>
    </alternativeName>
    <alternativeName>
        <fullName evidence="1">Propionyl-CoA carboxylase</fullName>
        <shortName evidence="1">PCC</shortName>
        <ecNumber evidence="1">2.1.3.-</ecNumber>
    </alternativeName>
</protein>
<organism>
    <name type="scientific">Mycobacterium tuberculosis (strain CDC 1551 / Oshkosh)</name>
    <dbReference type="NCBI Taxonomy" id="83331"/>
    <lineage>
        <taxon>Bacteria</taxon>
        <taxon>Bacillati</taxon>
        <taxon>Actinomycetota</taxon>
        <taxon>Actinomycetes</taxon>
        <taxon>Mycobacteriales</taxon>
        <taxon>Mycobacteriaceae</taxon>
        <taxon>Mycobacterium</taxon>
        <taxon>Mycobacterium tuberculosis complex</taxon>
    </lineage>
</organism>
<sequence>MTIMAPEAVGESLDPRDPLLRLSNFFDDGSVELLHERDRSGVLAAAGTVNGVRTIAFCTDGTVMGGAMGVEGCTHIVNAYDTAIEDQSPIVGIWHSGGARLAEGVRALHAVGQVFEAMIRASGYIPQISVVVGFAAGGAAYGPALTDVVVMAPESRVFVTGPDVVRSVTGEDVDMASLGGPETHHKKSGVCHIVADDELDAYDRGRRLVGLFCQQGHFDRSKAEAGDTDIHALLPESSRRAYDVRPIVTAILDADTPFDEFQANWAPSMVVGLGRLSGRTVGVLANNPLRLGGCLNSESAEKAARFVRLCDAFGIPLVVVVDVPGYLPGVDQEWGGVVRRGAKLLHAFGECTVPRVTLVTRKTYGGAYIAMNSRSLNATKVFAWPDAEVAVMGAKAAVGILHKKKLAAAPEHEREALHDQLAAEHERIAGGVDSALDIGVVDEKIDPAHTRSKLTEALAQAPARRGRHKNIPL</sequence>
<accession>P9WQH4</accession>
<accession>L0TBQ7</accession>
<accession>P63407</accession>
<accession>Q10506</accession>
<name>ACCD6_MYCTO</name>
<feature type="chain" id="PRO_0000426775" description="Biotin-dependent acetyl-/propionyl-coenzyme A carboxylase beta6 subunit">
    <location>
        <begin position="1"/>
        <end position="473"/>
    </location>
</feature>
<feature type="domain" description="CoA carboxyltransferase N-terminal" evidence="2">
    <location>
        <begin position="1"/>
        <end position="224"/>
    </location>
</feature>
<feature type="domain" description="CoA carboxyltransferase C-terminal" evidence="3">
    <location>
        <begin position="225"/>
        <end position="473"/>
    </location>
</feature>
<keyword id="KW-0275">Fatty acid biosynthesis</keyword>
<keyword id="KW-0276">Fatty acid metabolism</keyword>
<keyword id="KW-0444">Lipid biosynthesis</keyword>
<keyword id="KW-0443">Lipid metabolism</keyword>
<keyword id="KW-1185">Reference proteome</keyword>
<keyword id="KW-0808">Transferase</keyword>
<proteinExistence type="inferred from homology"/>
<dbReference type="EC" id="2.1.3.15" evidence="1"/>
<dbReference type="EC" id="2.1.3.-" evidence="1"/>
<dbReference type="EMBL" id="AE000516">
    <property type="protein sequence ID" value="AAK46591.1"/>
    <property type="molecule type" value="Genomic_DNA"/>
</dbReference>
<dbReference type="PIR" id="C70779">
    <property type="entry name" value="C70779"/>
</dbReference>
<dbReference type="RefSeq" id="WP_003900487.1">
    <property type="nucleotide sequence ID" value="NZ_KK341227.1"/>
</dbReference>
<dbReference type="SMR" id="P9WQH4"/>
<dbReference type="KEGG" id="mtc:MT2307"/>
<dbReference type="PATRIC" id="fig|83331.31.peg.2484"/>
<dbReference type="HOGENOM" id="CLU_018822_6_2_11"/>
<dbReference type="UniPathway" id="UPA00094"/>
<dbReference type="UniPathway" id="UPA00915"/>
<dbReference type="Proteomes" id="UP000001020">
    <property type="component" value="Chromosome"/>
</dbReference>
<dbReference type="GO" id="GO:0009317">
    <property type="term" value="C:acetyl-CoA carboxylase complex"/>
    <property type="evidence" value="ECO:0007669"/>
    <property type="project" value="TreeGrafter"/>
</dbReference>
<dbReference type="GO" id="GO:0004658">
    <property type="term" value="F:propionyl-CoA carboxylase activity"/>
    <property type="evidence" value="ECO:0007669"/>
    <property type="project" value="TreeGrafter"/>
</dbReference>
<dbReference type="GO" id="GO:0016740">
    <property type="term" value="F:transferase activity"/>
    <property type="evidence" value="ECO:0007669"/>
    <property type="project" value="UniProtKB-KW"/>
</dbReference>
<dbReference type="GO" id="GO:0006633">
    <property type="term" value="P:fatty acid biosynthetic process"/>
    <property type="evidence" value="ECO:0007669"/>
    <property type="project" value="UniProtKB-UniPathway"/>
</dbReference>
<dbReference type="FunFam" id="3.90.226.10:FF:000039">
    <property type="entry name" value="Propionyl-CoA carboxylase subunit beta 6"/>
    <property type="match status" value="1"/>
</dbReference>
<dbReference type="FunFam" id="3.90.226.10:FF:000060">
    <property type="entry name" value="Propionyl-CoA carboxylase subunit beta 6"/>
    <property type="match status" value="1"/>
</dbReference>
<dbReference type="Gene3D" id="3.90.226.10">
    <property type="entry name" value="2-enoyl-CoA Hydratase, Chain A, domain 1"/>
    <property type="match status" value="2"/>
</dbReference>
<dbReference type="InterPro" id="IPR051047">
    <property type="entry name" value="AccD/PCCB"/>
</dbReference>
<dbReference type="InterPro" id="IPR034733">
    <property type="entry name" value="AcCoA_carboxyl_beta"/>
</dbReference>
<dbReference type="InterPro" id="IPR029045">
    <property type="entry name" value="ClpP/crotonase-like_dom_sf"/>
</dbReference>
<dbReference type="InterPro" id="IPR011763">
    <property type="entry name" value="COA_CT_C"/>
</dbReference>
<dbReference type="InterPro" id="IPR011762">
    <property type="entry name" value="COA_CT_N"/>
</dbReference>
<dbReference type="PANTHER" id="PTHR43842">
    <property type="entry name" value="PROPIONYL-COA CARBOXYLASE BETA CHAIN"/>
    <property type="match status" value="1"/>
</dbReference>
<dbReference type="PANTHER" id="PTHR43842:SF2">
    <property type="entry name" value="PROPIONYL-COA CARBOXYLASE BETA CHAIN, MITOCHONDRIAL"/>
    <property type="match status" value="1"/>
</dbReference>
<dbReference type="Pfam" id="PF01039">
    <property type="entry name" value="Carboxyl_trans"/>
    <property type="match status" value="1"/>
</dbReference>
<dbReference type="SUPFAM" id="SSF52096">
    <property type="entry name" value="ClpP/crotonase"/>
    <property type="match status" value="2"/>
</dbReference>
<dbReference type="PROSITE" id="PS50989">
    <property type="entry name" value="COA_CT_CTER"/>
    <property type="match status" value="1"/>
</dbReference>
<dbReference type="PROSITE" id="PS50980">
    <property type="entry name" value="COA_CT_NTER"/>
    <property type="match status" value="1"/>
</dbReference>
<evidence type="ECO:0000250" key="1">
    <source>
        <dbReference type="UniProtKB" id="P9WQH5"/>
    </source>
</evidence>
<evidence type="ECO:0000255" key="2">
    <source>
        <dbReference type="PROSITE-ProRule" id="PRU01136"/>
    </source>
</evidence>
<evidence type="ECO:0000255" key="3">
    <source>
        <dbReference type="PROSITE-ProRule" id="PRU01137"/>
    </source>
</evidence>
<evidence type="ECO:0000305" key="4"/>
<reference key="1">
    <citation type="journal article" date="2002" name="J. Bacteriol.">
        <title>Whole-genome comparison of Mycobacterium tuberculosis clinical and laboratory strains.</title>
        <authorList>
            <person name="Fleischmann R.D."/>
            <person name="Alland D."/>
            <person name="Eisen J.A."/>
            <person name="Carpenter L."/>
            <person name="White O."/>
            <person name="Peterson J.D."/>
            <person name="DeBoy R.T."/>
            <person name="Dodson R.J."/>
            <person name="Gwinn M.L."/>
            <person name="Haft D.H."/>
            <person name="Hickey E.K."/>
            <person name="Kolonay J.F."/>
            <person name="Nelson W.C."/>
            <person name="Umayam L.A."/>
            <person name="Ermolaeva M.D."/>
            <person name="Salzberg S.L."/>
            <person name="Delcher A."/>
            <person name="Utterback T.R."/>
            <person name="Weidman J.F."/>
            <person name="Khouri H.M."/>
            <person name="Gill J."/>
            <person name="Mikula A."/>
            <person name="Bishai W."/>
            <person name="Jacobs W.R. Jr."/>
            <person name="Venter J.C."/>
            <person name="Fraser C.M."/>
        </authorList>
    </citation>
    <scope>NUCLEOTIDE SEQUENCE [LARGE SCALE GENOMIC DNA]</scope>
    <source>
        <strain>CDC 1551 / Oshkosh</strain>
    </source>
</reference>
<gene>
    <name type="primary">accD6</name>
    <name type="ordered locus">MT2307</name>
</gene>
<comment type="function">
    <text evidence="1">Component of a biotin-dependent acyl-CoA carboxylase complex. This subunit transfers the CO2 from carboxybiotin to the CoA ester substrate. When associated with the alpha3 subunit AccA3, is involved in the carboxylation of acetyl-CoA and propionyl-CoA.</text>
</comment>
<comment type="catalytic activity">
    <reaction evidence="1">
        <text>N(6)-carboxybiotinyl-L-lysyl-[protein] + acetyl-CoA = N(6)-biotinyl-L-lysyl-[protein] + malonyl-CoA</text>
        <dbReference type="Rhea" id="RHEA:54728"/>
        <dbReference type="Rhea" id="RHEA-COMP:10505"/>
        <dbReference type="Rhea" id="RHEA-COMP:10506"/>
        <dbReference type="ChEBI" id="CHEBI:57288"/>
        <dbReference type="ChEBI" id="CHEBI:57384"/>
        <dbReference type="ChEBI" id="CHEBI:83144"/>
        <dbReference type="ChEBI" id="CHEBI:83145"/>
        <dbReference type="EC" id="2.1.3.15"/>
    </reaction>
    <physiologicalReaction direction="left-to-right" evidence="1">
        <dbReference type="Rhea" id="RHEA:54729"/>
    </physiologicalReaction>
</comment>
<comment type="catalytic activity">
    <reaction evidence="1">
        <text>N(6)-carboxybiotinyl-L-lysyl-[protein] + propanoyl-CoA = methylmalonyl-CoA + N(6)-biotinyl-L-lysyl-[protein]</text>
        <dbReference type="Rhea" id="RHEA:66612"/>
        <dbReference type="Rhea" id="RHEA-COMP:10505"/>
        <dbReference type="Rhea" id="RHEA-COMP:10506"/>
        <dbReference type="ChEBI" id="CHEBI:57392"/>
        <dbReference type="ChEBI" id="CHEBI:59916"/>
        <dbReference type="ChEBI" id="CHEBI:83144"/>
        <dbReference type="ChEBI" id="CHEBI:83145"/>
    </reaction>
    <physiologicalReaction direction="left-to-right" evidence="1">
        <dbReference type="Rhea" id="RHEA:66613"/>
    </physiologicalReaction>
</comment>
<comment type="pathway">
    <text evidence="1">Lipid metabolism; fatty acid biosynthesis.</text>
</comment>
<comment type="pathway">
    <text evidence="1">Lipid metabolism; mycolic acid biosynthesis.</text>
</comment>
<comment type="subunit">
    <text evidence="1">The biotin-dependent acyl-CoA carboxylase complex is composed of AccA3, which contains the biotin carboxylase (BC) and biotin carboxyl carrier protein (BCCP) domains, and AccD6, which contains the carboxyl transferase (CT) domain.</text>
</comment>
<comment type="similarity">
    <text evidence="4">Belongs to the AccD/PCCB family.</text>
</comment>